<keyword id="KW-1043">Host membrane</keyword>
<keyword id="KW-0472">Membrane</keyword>
<keyword id="KW-1185">Reference proteome</keyword>
<keyword id="KW-0812">Transmembrane</keyword>
<keyword id="KW-1133">Transmembrane helix</keyword>
<organismHost>
    <name type="scientific">Vitis vinifera</name>
    <name type="common">Grape</name>
    <dbReference type="NCBI Taxonomy" id="29760"/>
</organismHost>
<evidence type="ECO:0000255" key="1"/>
<evidence type="ECO:0000305" key="2"/>
<accession>O41517</accession>
<dbReference type="EMBL" id="AF037268">
    <property type="protein sequence ID" value="AAC40709.1"/>
    <property type="molecule type" value="Genomic_RNA"/>
</dbReference>
<dbReference type="RefSeq" id="NP_813800.1">
    <property type="nucleotide sequence ID" value="NC_004667.1"/>
</dbReference>
<dbReference type="KEGG" id="vg:1444468"/>
<dbReference type="Proteomes" id="UP000006707">
    <property type="component" value="Segment"/>
</dbReference>
<dbReference type="GO" id="GO:0033644">
    <property type="term" value="C:host cell membrane"/>
    <property type="evidence" value="ECO:0007669"/>
    <property type="project" value="UniProtKB-SubCell"/>
</dbReference>
<dbReference type="GO" id="GO:0016020">
    <property type="term" value="C:membrane"/>
    <property type="evidence" value="ECO:0007669"/>
    <property type="project" value="UniProtKB-KW"/>
</dbReference>
<gene>
    <name type="ORF">ORF5</name>
</gene>
<reference key="1">
    <citation type="journal article" date="1997" name="Arch. Virol.">
        <title>The coat protein gene of grapevine leafroll associated closterovirus-3: cloning, nucleotide sequencing and expression in transgenic plants.</title>
        <authorList>
            <person name="Ling K.S."/>
            <person name="Zhu H.Y."/>
            <person name="Alvizo H."/>
            <person name="Hu J.S."/>
            <person name="Drong R.F."/>
            <person name="Slightom J.L."/>
            <person name="Gonsalves D."/>
        </authorList>
    </citation>
    <scope>NUCLEOTIDE SEQUENCE [GENOMIC RNA]</scope>
</reference>
<reference key="2">
    <citation type="journal article" date="1998" name="J. Gen. Virol.">
        <title>Nucleotide sequence of the 3'-terminal two-thirds of the grapevine leafroll-associated virus-3 genome reveals a typical monopartite closterovirus.</title>
        <authorList>
            <person name="Ling K.S."/>
            <person name="Zhu H.Y."/>
            <person name="Drong R.F."/>
            <person name="Slightom J.L."/>
            <person name="McFerson J.R."/>
            <person name="Gonsalves D."/>
        </authorList>
    </citation>
    <scope>NUCLEOTIDE SEQUENCE [GENOMIC RNA]</scope>
</reference>
<proteinExistence type="predicted"/>
<name>P55_GLRV3</name>
<organism>
    <name type="scientific">Grapevine leafroll-associated virus 3 (isolate United States/NY1)</name>
    <name type="common">GLRaV-3</name>
    <name type="synonym">Grapevine leafroll-associated closterovirus (isolate 109)</name>
    <dbReference type="NCBI Taxonomy" id="651354"/>
    <lineage>
        <taxon>Viruses</taxon>
        <taxon>Riboviria</taxon>
        <taxon>Orthornavirae</taxon>
        <taxon>Kitrinoviricota</taxon>
        <taxon>Alsuviricetes</taxon>
        <taxon>Martellivirales</taxon>
        <taxon>Closteroviridae</taxon>
        <taxon>Ampelovirus</taxon>
        <taxon>Grapevine leafroll-associated virus 3</taxon>
    </lineage>
</organism>
<comment type="subcellular location">
    <subcellularLocation>
        <location evidence="2">Host membrane</location>
        <topology evidence="2">Single-pass membrane protein</topology>
    </subcellularLocation>
</comment>
<feature type="chain" id="PRO_0000402521" description="Protein P55">
    <location>
        <begin position="1"/>
        <end position="483"/>
    </location>
</feature>
<feature type="transmembrane region" description="Helical" evidence="1">
    <location>
        <begin position="342"/>
        <end position="359"/>
    </location>
</feature>
<protein>
    <recommendedName>
        <fullName>Protein P55</fullName>
    </recommendedName>
</protein>
<sequence>MDKYIYVTGILNPNEARDEVFSVVNKGYIGPGGRSFSNRGSKYTVVWENSAARISGFTSTSQSTIDAFAYFLLKGGLTTTLSNPINCENWVRSSKDLSAFFRTLIKGKIYASRSVDSNLPKKDRDDIMEASRRLSPSDAAFCRAVSVQVGKYVDVTQNLESTIVPLRVMEIKKRRGSAHVSLPKVVSAYVDFYTNLQELLSDEVTRARTDTVSAYATDSMAFLVKMLPLTAREQWLKDVLGYLLVRRRPANFSYDVRVAWVYDVIATLKLVIRLFFNKDTPGGIKDLKPCVPIESFDPFHELSSYFSRLSYEMTTGKGGKICPEIAEKLVRRLMEENYKLRLTPVMALIIILVYYSIYGTNATRIKRRPDFLNVRIKGRVEKVSLRGVEDRAFRISEKRGINAQRVLCRYYSDLTCLARRHYGIRRNNWKTLSYVDGTLAYDTADCITSKVRNTINTADHASIIHYIKTNENQVTGTTLPHQL</sequence>